<keyword id="KW-0238">DNA-binding</keyword>
<keyword id="KW-0804">Transcription</keyword>
<keyword id="KW-0805">Transcription regulation</keyword>
<name>GREB_VIBPA</name>
<proteinExistence type="inferred from homology"/>
<sequence>MKTKLITREGYNKLKQEHDYLWNEKRPEITKIVTWAASLGDRSENADYTFNKRLLRQIDRRVRFLRKFLPEVTIVDYSPQQEGKVFFGAWVEIENEAGDVKKFRIVGPEEIYGDAKDYISIDSPMARAMLKKQVDEEFTVRTPEGDKEWFINSIEYNKQSAES</sequence>
<evidence type="ECO:0000255" key="1">
    <source>
        <dbReference type="HAMAP-Rule" id="MF_00930"/>
    </source>
</evidence>
<accession>Q87TB8</accession>
<comment type="function">
    <text evidence="1">Necessary for efficient RNA polymerase transcription elongation past template-encoded arresting sites. The arresting sites in DNA have the property of trapping a certain fraction of elongating RNA polymerases that pass through, resulting in locked ternary complexes. Cleavage of the nascent transcript by cleavage factors such as GreA or GreB allows the resumption of elongation from the new 3'terminus. GreB releases sequences of up to 9 nucleotides in length.</text>
</comment>
<comment type="similarity">
    <text evidence="1">Belongs to the GreA/GreB family. GreB subfamily.</text>
</comment>
<dbReference type="EMBL" id="BA000031">
    <property type="protein sequence ID" value="BAC58415.1"/>
    <property type="molecule type" value="Genomic_DNA"/>
</dbReference>
<dbReference type="RefSeq" id="NP_796531.1">
    <property type="nucleotide sequence ID" value="NC_004603.1"/>
</dbReference>
<dbReference type="RefSeq" id="WP_005458979.1">
    <property type="nucleotide sequence ID" value="NC_004603.1"/>
</dbReference>
<dbReference type="SMR" id="Q87TB8"/>
<dbReference type="GeneID" id="1187619"/>
<dbReference type="KEGG" id="vpa:VP0152"/>
<dbReference type="PATRIC" id="fig|223926.6.peg.144"/>
<dbReference type="eggNOG" id="COG0782">
    <property type="taxonomic scope" value="Bacteria"/>
</dbReference>
<dbReference type="HOGENOM" id="CLU_101379_3_0_6"/>
<dbReference type="Proteomes" id="UP000002493">
    <property type="component" value="Chromosome 1"/>
</dbReference>
<dbReference type="GO" id="GO:0003677">
    <property type="term" value="F:DNA binding"/>
    <property type="evidence" value="ECO:0007669"/>
    <property type="project" value="UniProtKB-UniRule"/>
</dbReference>
<dbReference type="GO" id="GO:0070063">
    <property type="term" value="F:RNA polymerase binding"/>
    <property type="evidence" value="ECO:0007669"/>
    <property type="project" value="InterPro"/>
</dbReference>
<dbReference type="GO" id="GO:0006354">
    <property type="term" value="P:DNA-templated transcription elongation"/>
    <property type="evidence" value="ECO:0007669"/>
    <property type="project" value="TreeGrafter"/>
</dbReference>
<dbReference type="GO" id="GO:0032784">
    <property type="term" value="P:regulation of DNA-templated transcription elongation"/>
    <property type="evidence" value="ECO:0007669"/>
    <property type="project" value="UniProtKB-UniRule"/>
</dbReference>
<dbReference type="FunFam" id="1.10.287.180:FF:000001">
    <property type="entry name" value="Transcription elongation factor GreA"/>
    <property type="match status" value="1"/>
</dbReference>
<dbReference type="FunFam" id="3.10.50.30:FF:000001">
    <property type="entry name" value="Transcription elongation factor GreA"/>
    <property type="match status" value="1"/>
</dbReference>
<dbReference type="Gene3D" id="3.10.50.30">
    <property type="entry name" value="Transcription elongation factor, GreA/GreB, C-terminal domain"/>
    <property type="match status" value="1"/>
</dbReference>
<dbReference type="Gene3D" id="1.10.287.180">
    <property type="entry name" value="Transcription elongation factor, GreA/GreB, N-terminal domain"/>
    <property type="match status" value="1"/>
</dbReference>
<dbReference type="HAMAP" id="MF_00105">
    <property type="entry name" value="GreA_GreB"/>
    <property type="match status" value="1"/>
</dbReference>
<dbReference type="HAMAP" id="MF_00930">
    <property type="entry name" value="GreB"/>
    <property type="match status" value="1"/>
</dbReference>
<dbReference type="InterPro" id="IPR036953">
    <property type="entry name" value="GreA/GreB_C_sf"/>
</dbReference>
<dbReference type="InterPro" id="IPR018151">
    <property type="entry name" value="TF_GreA/GreB_CS"/>
</dbReference>
<dbReference type="InterPro" id="IPR028624">
    <property type="entry name" value="Tscrpt_elong_fac_GreA/B"/>
</dbReference>
<dbReference type="InterPro" id="IPR001437">
    <property type="entry name" value="Tscrpt_elong_fac_GreA/B_C"/>
</dbReference>
<dbReference type="InterPro" id="IPR023459">
    <property type="entry name" value="Tscrpt_elong_fac_GreA/B_fam"/>
</dbReference>
<dbReference type="InterPro" id="IPR022691">
    <property type="entry name" value="Tscrpt_elong_fac_GreA/B_N"/>
</dbReference>
<dbReference type="InterPro" id="IPR036805">
    <property type="entry name" value="Tscrpt_elong_fac_GreA/B_N_sf"/>
</dbReference>
<dbReference type="InterPro" id="IPR006358">
    <property type="entry name" value="Tscrpt_elong_fac_GreB"/>
</dbReference>
<dbReference type="NCBIfam" id="TIGR01461">
    <property type="entry name" value="greB"/>
    <property type="match status" value="1"/>
</dbReference>
<dbReference type="NCBIfam" id="NF002506">
    <property type="entry name" value="PRK01885.1"/>
    <property type="match status" value="1"/>
</dbReference>
<dbReference type="PANTHER" id="PTHR30437">
    <property type="entry name" value="TRANSCRIPTION ELONGATION FACTOR GREA"/>
    <property type="match status" value="1"/>
</dbReference>
<dbReference type="PANTHER" id="PTHR30437:SF6">
    <property type="entry name" value="TRANSCRIPTION ELONGATION FACTOR GREB"/>
    <property type="match status" value="1"/>
</dbReference>
<dbReference type="Pfam" id="PF01272">
    <property type="entry name" value="GreA_GreB"/>
    <property type="match status" value="1"/>
</dbReference>
<dbReference type="Pfam" id="PF03449">
    <property type="entry name" value="GreA_GreB_N"/>
    <property type="match status" value="1"/>
</dbReference>
<dbReference type="PIRSF" id="PIRSF006092">
    <property type="entry name" value="GreA_GreB"/>
    <property type="match status" value="1"/>
</dbReference>
<dbReference type="SUPFAM" id="SSF54534">
    <property type="entry name" value="FKBP-like"/>
    <property type="match status" value="1"/>
</dbReference>
<dbReference type="SUPFAM" id="SSF46557">
    <property type="entry name" value="GreA transcript cleavage protein, N-terminal domain"/>
    <property type="match status" value="1"/>
</dbReference>
<dbReference type="PROSITE" id="PS00829">
    <property type="entry name" value="GREAB_1"/>
    <property type="match status" value="1"/>
</dbReference>
<dbReference type="PROSITE" id="PS00830">
    <property type="entry name" value="GREAB_2"/>
    <property type="match status" value="1"/>
</dbReference>
<reference key="1">
    <citation type="journal article" date="2003" name="Lancet">
        <title>Genome sequence of Vibrio parahaemolyticus: a pathogenic mechanism distinct from that of V. cholerae.</title>
        <authorList>
            <person name="Makino K."/>
            <person name="Oshima K."/>
            <person name="Kurokawa K."/>
            <person name="Yokoyama K."/>
            <person name="Uda T."/>
            <person name="Tagomori K."/>
            <person name="Iijima Y."/>
            <person name="Najima M."/>
            <person name="Nakano M."/>
            <person name="Yamashita A."/>
            <person name="Kubota Y."/>
            <person name="Kimura S."/>
            <person name="Yasunaga T."/>
            <person name="Honda T."/>
            <person name="Shinagawa H."/>
            <person name="Hattori M."/>
            <person name="Iida T."/>
        </authorList>
    </citation>
    <scope>NUCLEOTIDE SEQUENCE [LARGE SCALE GENOMIC DNA]</scope>
    <source>
        <strain>RIMD 2210633</strain>
    </source>
</reference>
<feature type="chain" id="PRO_0000176992" description="Transcription elongation factor GreB">
    <location>
        <begin position="1"/>
        <end position="163"/>
    </location>
</feature>
<organism>
    <name type="scientific">Vibrio parahaemolyticus serotype O3:K6 (strain RIMD 2210633)</name>
    <dbReference type="NCBI Taxonomy" id="223926"/>
    <lineage>
        <taxon>Bacteria</taxon>
        <taxon>Pseudomonadati</taxon>
        <taxon>Pseudomonadota</taxon>
        <taxon>Gammaproteobacteria</taxon>
        <taxon>Vibrionales</taxon>
        <taxon>Vibrionaceae</taxon>
        <taxon>Vibrio</taxon>
    </lineage>
</organism>
<protein>
    <recommendedName>
        <fullName evidence="1">Transcription elongation factor GreB</fullName>
    </recommendedName>
    <alternativeName>
        <fullName evidence="1">Transcript cleavage factor GreB</fullName>
    </alternativeName>
</protein>
<gene>
    <name evidence="1" type="primary">greB</name>
    <name type="ordered locus">VP0152</name>
</gene>